<keyword id="KW-0131">Cell cycle</keyword>
<keyword id="KW-0132">Cell division</keyword>
<keyword id="KW-0963">Cytoplasm</keyword>
<keyword id="KW-0717">Septation</keyword>
<sequence>MILYEYPFNERVRAYLRLEYLFDRLFYFAREGDARHHQIAVATLFDILDATERTDIKTSVLQDLERQRAALQALRDHPGVAQDALESMLAEMERTVSGLAGQGRAGQPLRENEWLVSLRGRLAVPGGATQVDMPSYHAWQHRTEAVRCADLQTWTAPLRPLHDAVAMALRLLRESGRRSEIVAEQGGYQQMLAGKLFQLLRVWIDPAQGVFPEISANKYMIWIRFSAQDGDAKPQQVARNIDFQMSLCSS</sequence>
<accession>A9I1I9</accession>
<organism>
    <name type="scientific">Bordetella petrii (strain ATCC BAA-461 / DSM 12804 / CCUG 43448)</name>
    <dbReference type="NCBI Taxonomy" id="340100"/>
    <lineage>
        <taxon>Bacteria</taxon>
        <taxon>Pseudomonadati</taxon>
        <taxon>Pseudomonadota</taxon>
        <taxon>Betaproteobacteria</taxon>
        <taxon>Burkholderiales</taxon>
        <taxon>Alcaligenaceae</taxon>
        <taxon>Bordetella</taxon>
    </lineage>
</organism>
<name>ZAPD_BORPD</name>
<proteinExistence type="inferred from homology"/>
<comment type="function">
    <text evidence="1">Cell division factor that enhances FtsZ-ring assembly. Directly interacts with FtsZ and promotes bundling of FtsZ protofilaments, with a reduction in FtsZ GTPase activity.</text>
</comment>
<comment type="subunit">
    <text evidence="1">Interacts with FtsZ.</text>
</comment>
<comment type="subcellular location">
    <subcellularLocation>
        <location evidence="1">Cytoplasm</location>
    </subcellularLocation>
    <text evidence="1">Localizes to mid-cell in an FtsZ-dependent manner.</text>
</comment>
<comment type="similarity">
    <text evidence="1">Belongs to the ZapD family.</text>
</comment>
<reference key="1">
    <citation type="journal article" date="2008" name="BMC Genomics">
        <title>The missing link: Bordetella petrii is endowed with both the metabolic versatility of environmental bacteria and virulence traits of pathogenic Bordetellae.</title>
        <authorList>
            <person name="Gross R."/>
            <person name="Guzman C.A."/>
            <person name="Sebaihia M."/>
            <person name="Martin dos Santos V.A.P."/>
            <person name="Pieper D.H."/>
            <person name="Koebnik R."/>
            <person name="Lechner M."/>
            <person name="Bartels D."/>
            <person name="Buhrmester J."/>
            <person name="Choudhuri J.V."/>
            <person name="Ebensen T."/>
            <person name="Gaigalat L."/>
            <person name="Herrmann S."/>
            <person name="Khachane A.N."/>
            <person name="Larisch C."/>
            <person name="Link S."/>
            <person name="Linke B."/>
            <person name="Meyer F."/>
            <person name="Mormann S."/>
            <person name="Nakunst D."/>
            <person name="Rueckert C."/>
            <person name="Schneiker-Bekel S."/>
            <person name="Schulze K."/>
            <person name="Voerholter F.-J."/>
            <person name="Yevsa T."/>
            <person name="Engle J.T."/>
            <person name="Goldman W.E."/>
            <person name="Puehler A."/>
            <person name="Goebel U.B."/>
            <person name="Goesmann A."/>
            <person name="Bloecker H."/>
            <person name="Kaiser O."/>
            <person name="Martinez-Arias R."/>
        </authorList>
    </citation>
    <scope>NUCLEOTIDE SEQUENCE [LARGE SCALE GENOMIC DNA]</scope>
    <source>
        <strain>ATCC BAA-461 / DSM 12804 / CCUG 43448</strain>
    </source>
</reference>
<protein>
    <recommendedName>
        <fullName evidence="1">Cell division protein ZapD</fullName>
    </recommendedName>
    <alternativeName>
        <fullName evidence="1">Z ring-associated protein D</fullName>
    </alternativeName>
</protein>
<gene>
    <name evidence="1" type="primary">zapD</name>
    <name type="ordered locus">Bpet0534</name>
</gene>
<dbReference type="EMBL" id="AM902716">
    <property type="protein sequence ID" value="CAP40866.1"/>
    <property type="molecule type" value="Genomic_DNA"/>
</dbReference>
<dbReference type="SMR" id="A9I1I9"/>
<dbReference type="STRING" id="94624.Bpet0534"/>
<dbReference type="KEGG" id="bpt:Bpet0534"/>
<dbReference type="eggNOG" id="COG4582">
    <property type="taxonomic scope" value="Bacteria"/>
</dbReference>
<dbReference type="Proteomes" id="UP000001225">
    <property type="component" value="Chromosome"/>
</dbReference>
<dbReference type="GO" id="GO:0032153">
    <property type="term" value="C:cell division site"/>
    <property type="evidence" value="ECO:0007669"/>
    <property type="project" value="TreeGrafter"/>
</dbReference>
<dbReference type="GO" id="GO:0005737">
    <property type="term" value="C:cytoplasm"/>
    <property type="evidence" value="ECO:0007669"/>
    <property type="project" value="UniProtKB-SubCell"/>
</dbReference>
<dbReference type="GO" id="GO:0000917">
    <property type="term" value="P:division septum assembly"/>
    <property type="evidence" value="ECO:0007669"/>
    <property type="project" value="UniProtKB-KW"/>
</dbReference>
<dbReference type="GO" id="GO:0043093">
    <property type="term" value="P:FtsZ-dependent cytokinesis"/>
    <property type="evidence" value="ECO:0007669"/>
    <property type="project" value="UniProtKB-UniRule"/>
</dbReference>
<dbReference type="Gene3D" id="1.10.3900.10">
    <property type="entry name" value="YacF-like"/>
    <property type="match status" value="1"/>
</dbReference>
<dbReference type="Gene3D" id="2.60.440.10">
    <property type="entry name" value="YacF-like domains"/>
    <property type="match status" value="1"/>
</dbReference>
<dbReference type="HAMAP" id="MF_01092">
    <property type="entry name" value="ZapD"/>
    <property type="match status" value="1"/>
</dbReference>
<dbReference type="InterPro" id="IPR009777">
    <property type="entry name" value="ZapD"/>
</dbReference>
<dbReference type="InterPro" id="IPR027462">
    <property type="entry name" value="ZapD_C"/>
</dbReference>
<dbReference type="InterPro" id="IPR036268">
    <property type="entry name" value="ZapD_sf"/>
</dbReference>
<dbReference type="NCBIfam" id="NF003656">
    <property type="entry name" value="PRK05287.1-4"/>
    <property type="match status" value="1"/>
</dbReference>
<dbReference type="PANTHER" id="PTHR39455">
    <property type="entry name" value="CELL DIVISION PROTEIN ZAPD"/>
    <property type="match status" value="1"/>
</dbReference>
<dbReference type="PANTHER" id="PTHR39455:SF1">
    <property type="entry name" value="CELL DIVISION PROTEIN ZAPD"/>
    <property type="match status" value="1"/>
</dbReference>
<dbReference type="Pfam" id="PF07072">
    <property type="entry name" value="ZapD"/>
    <property type="match status" value="1"/>
</dbReference>
<dbReference type="SUPFAM" id="SSF160950">
    <property type="entry name" value="YacF-like"/>
    <property type="match status" value="1"/>
</dbReference>
<feature type="chain" id="PRO_1000136927" description="Cell division protein ZapD">
    <location>
        <begin position="1"/>
        <end position="250"/>
    </location>
</feature>
<evidence type="ECO:0000255" key="1">
    <source>
        <dbReference type="HAMAP-Rule" id="MF_01092"/>
    </source>
</evidence>